<gene>
    <name evidence="1" type="primary">purQ</name>
    <name type="ordered locus">BH0628</name>
</gene>
<evidence type="ECO:0000255" key="1">
    <source>
        <dbReference type="HAMAP-Rule" id="MF_00421"/>
    </source>
</evidence>
<keyword id="KW-0067">ATP-binding</keyword>
<keyword id="KW-0963">Cytoplasm</keyword>
<keyword id="KW-0315">Glutamine amidotransferase</keyword>
<keyword id="KW-0378">Hydrolase</keyword>
<keyword id="KW-0436">Ligase</keyword>
<keyword id="KW-0547">Nucleotide-binding</keyword>
<keyword id="KW-0658">Purine biosynthesis</keyword>
<keyword id="KW-1185">Reference proteome</keyword>
<comment type="function">
    <text evidence="1">Part of the phosphoribosylformylglycinamidine synthase complex involved in the purines biosynthetic pathway. Catalyzes the ATP-dependent conversion of formylglycinamide ribonucleotide (FGAR) and glutamine to yield formylglycinamidine ribonucleotide (FGAM) and glutamate. The FGAM synthase complex is composed of three subunits. PurQ produces an ammonia molecule by converting glutamine to glutamate. PurL transfers the ammonia molecule to FGAR to form FGAM in an ATP-dependent manner. PurS interacts with PurQ and PurL and is thought to assist in the transfer of the ammonia molecule from PurQ to PurL.</text>
</comment>
<comment type="catalytic activity">
    <reaction evidence="1">
        <text>N(2)-formyl-N(1)-(5-phospho-beta-D-ribosyl)glycinamide + L-glutamine + ATP + H2O = 2-formamido-N(1)-(5-O-phospho-beta-D-ribosyl)acetamidine + L-glutamate + ADP + phosphate + H(+)</text>
        <dbReference type="Rhea" id="RHEA:17129"/>
        <dbReference type="ChEBI" id="CHEBI:15377"/>
        <dbReference type="ChEBI" id="CHEBI:15378"/>
        <dbReference type="ChEBI" id="CHEBI:29985"/>
        <dbReference type="ChEBI" id="CHEBI:30616"/>
        <dbReference type="ChEBI" id="CHEBI:43474"/>
        <dbReference type="ChEBI" id="CHEBI:58359"/>
        <dbReference type="ChEBI" id="CHEBI:147286"/>
        <dbReference type="ChEBI" id="CHEBI:147287"/>
        <dbReference type="ChEBI" id="CHEBI:456216"/>
        <dbReference type="EC" id="6.3.5.3"/>
    </reaction>
</comment>
<comment type="catalytic activity">
    <reaction evidence="1">
        <text>L-glutamine + H2O = L-glutamate + NH4(+)</text>
        <dbReference type="Rhea" id="RHEA:15889"/>
        <dbReference type="ChEBI" id="CHEBI:15377"/>
        <dbReference type="ChEBI" id="CHEBI:28938"/>
        <dbReference type="ChEBI" id="CHEBI:29985"/>
        <dbReference type="ChEBI" id="CHEBI:58359"/>
        <dbReference type="EC" id="3.5.1.2"/>
    </reaction>
</comment>
<comment type="pathway">
    <text evidence="1">Purine metabolism; IMP biosynthesis via de novo pathway; 5-amino-1-(5-phospho-D-ribosyl)imidazole from N(2)-formyl-N(1)-(5-phospho-D-ribosyl)glycinamide: step 1/2.</text>
</comment>
<comment type="subunit">
    <text evidence="1">Part of the FGAM synthase complex composed of 1 PurL, 1 PurQ and 2 PurS subunits.</text>
</comment>
<comment type="subcellular location">
    <subcellularLocation>
        <location evidence="1">Cytoplasm</location>
    </subcellularLocation>
</comment>
<sequence length="227" mass="25161">MKFAVIVFPGSNCDADMYHAVKDALGEEVDYLWHTETSVEGYDAILLPGGFSYGDYLRSGSIARFSPIMEDVIRAANEGVPVLGVCNGFQVLLEAGLLPGAMLRNEKLTFICKPVELEVQNNDTFFTSEYEQGETITIPVAHGEGNYYCDDETLKQLEANNQVVFRYTDRVNGSRNHIAGIVNKAGNVLGMMPHPERAVEQLVGGEDGLRLFKSILRNWRESHVVTP</sequence>
<organism>
    <name type="scientific">Halalkalibacterium halodurans (strain ATCC BAA-125 / DSM 18197 / FERM 7344 / JCM 9153 / C-125)</name>
    <name type="common">Bacillus halodurans</name>
    <dbReference type="NCBI Taxonomy" id="272558"/>
    <lineage>
        <taxon>Bacteria</taxon>
        <taxon>Bacillati</taxon>
        <taxon>Bacillota</taxon>
        <taxon>Bacilli</taxon>
        <taxon>Bacillales</taxon>
        <taxon>Bacillaceae</taxon>
        <taxon>Halalkalibacterium (ex Joshi et al. 2022)</taxon>
    </lineage>
</organism>
<feature type="chain" id="PRO_0000100535" description="Phosphoribosylformylglycinamidine synthase subunit PurQ">
    <location>
        <begin position="1"/>
        <end position="227"/>
    </location>
</feature>
<feature type="domain" description="Glutamine amidotransferase type-1" evidence="1">
    <location>
        <begin position="3"/>
        <end position="225"/>
    </location>
</feature>
<feature type="active site" description="Nucleophile" evidence="1">
    <location>
        <position position="86"/>
    </location>
</feature>
<feature type="active site" evidence="1">
    <location>
        <position position="194"/>
    </location>
</feature>
<feature type="active site" evidence="1">
    <location>
        <position position="196"/>
    </location>
</feature>
<accession>Q9KF58</accession>
<proteinExistence type="inferred from homology"/>
<dbReference type="EC" id="6.3.5.3" evidence="1"/>
<dbReference type="EC" id="3.5.1.2" evidence="1"/>
<dbReference type="EMBL" id="BA000004">
    <property type="protein sequence ID" value="BAB04347.1"/>
    <property type="molecule type" value="Genomic_DNA"/>
</dbReference>
<dbReference type="PIR" id="D83728">
    <property type="entry name" value="D83728"/>
</dbReference>
<dbReference type="RefSeq" id="WP_010896804.1">
    <property type="nucleotide sequence ID" value="NC_002570.2"/>
</dbReference>
<dbReference type="SMR" id="Q9KF58"/>
<dbReference type="STRING" id="272558.gene:10726502"/>
<dbReference type="GeneID" id="87596200"/>
<dbReference type="KEGG" id="bha:BH0628"/>
<dbReference type="eggNOG" id="COG0047">
    <property type="taxonomic scope" value="Bacteria"/>
</dbReference>
<dbReference type="HOGENOM" id="CLU_001031_3_1_9"/>
<dbReference type="OrthoDB" id="9804441at2"/>
<dbReference type="UniPathway" id="UPA00074">
    <property type="reaction ID" value="UER00128"/>
</dbReference>
<dbReference type="Proteomes" id="UP000001258">
    <property type="component" value="Chromosome"/>
</dbReference>
<dbReference type="GO" id="GO:0005737">
    <property type="term" value="C:cytoplasm"/>
    <property type="evidence" value="ECO:0007669"/>
    <property type="project" value="UniProtKB-SubCell"/>
</dbReference>
<dbReference type="GO" id="GO:0005524">
    <property type="term" value="F:ATP binding"/>
    <property type="evidence" value="ECO:0007669"/>
    <property type="project" value="UniProtKB-KW"/>
</dbReference>
<dbReference type="GO" id="GO:0004359">
    <property type="term" value="F:glutaminase activity"/>
    <property type="evidence" value="ECO:0007669"/>
    <property type="project" value="UniProtKB-EC"/>
</dbReference>
<dbReference type="GO" id="GO:0004642">
    <property type="term" value="F:phosphoribosylformylglycinamidine synthase activity"/>
    <property type="evidence" value="ECO:0007669"/>
    <property type="project" value="UniProtKB-UniRule"/>
</dbReference>
<dbReference type="GO" id="GO:0006189">
    <property type="term" value="P:'de novo' IMP biosynthetic process"/>
    <property type="evidence" value="ECO:0007669"/>
    <property type="project" value="UniProtKB-UniRule"/>
</dbReference>
<dbReference type="CDD" id="cd01740">
    <property type="entry name" value="GATase1_FGAR_AT"/>
    <property type="match status" value="1"/>
</dbReference>
<dbReference type="FunFam" id="3.40.50.880:FF:000019">
    <property type="entry name" value="Phosphoribosylformylglycinamidine synthase subunit PurQ"/>
    <property type="match status" value="1"/>
</dbReference>
<dbReference type="Gene3D" id="3.40.50.880">
    <property type="match status" value="1"/>
</dbReference>
<dbReference type="HAMAP" id="MF_00421">
    <property type="entry name" value="PurQ"/>
    <property type="match status" value="1"/>
</dbReference>
<dbReference type="InterPro" id="IPR029062">
    <property type="entry name" value="Class_I_gatase-like"/>
</dbReference>
<dbReference type="InterPro" id="IPR010075">
    <property type="entry name" value="PRibForGlyAmidine_synth_PurQ"/>
</dbReference>
<dbReference type="NCBIfam" id="TIGR01737">
    <property type="entry name" value="FGAM_synth_I"/>
    <property type="match status" value="1"/>
</dbReference>
<dbReference type="NCBIfam" id="NF002957">
    <property type="entry name" value="PRK03619.1"/>
    <property type="match status" value="1"/>
</dbReference>
<dbReference type="PANTHER" id="PTHR47552">
    <property type="entry name" value="PHOSPHORIBOSYLFORMYLGLYCINAMIDINE SYNTHASE SUBUNIT PURQ"/>
    <property type="match status" value="1"/>
</dbReference>
<dbReference type="PANTHER" id="PTHR47552:SF1">
    <property type="entry name" value="PHOSPHORIBOSYLFORMYLGLYCINAMIDINE SYNTHASE SUBUNIT PURQ"/>
    <property type="match status" value="1"/>
</dbReference>
<dbReference type="Pfam" id="PF13507">
    <property type="entry name" value="GATase_5"/>
    <property type="match status" value="1"/>
</dbReference>
<dbReference type="PIRSF" id="PIRSF001586">
    <property type="entry name" value="FGAM_synth_I"/>
    <property type="match status" value="1"/>
</dbReference>
<dbReference type="SMART" id="SM01211">
    <property type="entry name" value="GATase_5"/>
    <property type="match status" value="1"/>
</dbReference>
<dbReference type="SUPFAM" id="SSF52317">
    <property type="entry name" value="Class I glutamine amidotransferase-like"/>
    <property type="match status" value="1"/>
</dbReference>
<dbReference type="PROSITE" id="PS51273">
    <property type="entry name" value="GATASE_TYPE_1"/>
    <property type="match status" value="1"/>
</dbReference>
<reference key="1">
    <citation type="journal article" date="2000" name="Nucleic Acids Res.">
        <title>Complete genome sequence of the alkaliphilic bacterium Bacillus halodurans and genomic sequence comparison with Bacillus subtilis.</title>
        <authorList>
            <person name="Takami H."/>
            <person name="Nakasone K."/>
            <person name="Takaki Y."/>
            <person name="Maeno G."/>
            <person name="Sasaki R."/>
            <person name="Masui N."/>
            <person name="Fuji F."/>
            <person name="Hirama C."/>
            <person name="Nakamura Y."/>
            <person name="Ogasawara N."/>
            <person name="Kuhara S."/>
            <person name="Horikoshi K."/>
        </authorList>
    </citation>
    <scope>NUCLEOTIDE SEQUENCE [LARGE SCALE GENOMIC DNA]</scope>
    <source>
        <strain>ATCC BAA-125 / DSM 18197 / FERM 7344 / JCM 9153 / C-125</strain>
    </source>
</reference>
<name>PURQ_HALH5</name>
<protein>
    <recommendedName>
        <fullName evidence="1">Phosphoribosylformylglycinamidine synthase subunit PurQ</fullName>
        <shortName evidence="1">FGAM synthase</shortName>
        <ecNumber evidence="1">6.3.5.3</ecNumber>
    </recommendedName>
    <alternativeName>
        <fullName evidence="1">Formylglycinamide ribonucleotide amidotransferase subunit I</fullName>
        <shortName evidence="1">FGAR amidotransferase I</shortName>
        <shortName evidence="1">FGAR-AT I</shortName>
    </alternativeName>
    <alternativeName>
        <fullName evidence="1">Glutaminase PurQ</fullName>
        <ecNumber evidence="1">3.5.1.2</ecNumber>
    </alternativeName>
    <alternativeName>
        <fullName evidence="1">Phosphoribosylformylglycinamidine synthase subunit I</fullName>
    </alternativeName>
</protein>